<protein>
    <recommendedName>
        <fullName>E3 ubiquitin-protein ligase TRIM17</fullName>
        <ecNumber>2.3.2.27</ecNumber>
    </recommendedName>
    <alternativeName>
        <fullName>RING finger protein 16</fullName>
    </alternativeName>
    <alternativeName>
        <fullName evidence="11">RING-type E3 ubiquitin transferase TRIM17</fullName>
    </alternativeName>
    <alternativeName>
        <fullName>Testis RING finger protein</fullName>
    </alternativeName>
    <alternativeName>
        <fullName>Tripartite motif-containing protein 17</fullName>
    </alternativeName>
</protein>
<name>TRI17_HUMAN</name>
<sequence length="477" mass="54418">MEAVELARKLQEEATCSICLDYFTDPVMTTCGHNFCRACIQLSWEKARGKKGRRKRKGSFPCPECREMSPQRNLLPNRLLTKVAEMAQQHPGLQKQDLCQEHHEPLKLFCQKDQSPICVVCRESREHRLHRVLPAEEAVQGYKLKLEEDMEYLREQITRTGNLQAREEQSLAEWQGKVKERRERIVLEFEKMNLYLVEEEQRLLQALETEEEETASRLRESVACLDRQGHSLELLLLQLEERSTQGPLQMLQDMKEPLSRKNNVSVQCPEVAPPTRPRTVCRVPGQIEVLRGFLEDVVPDATSAYPYLLLYESRQRRYLGSSPEGSGFCSKDRFVAYPCAVGQTAFSSGRHYWEVGMNITGDALWALGVCRDNVSRKDRVPKCPENGFWVVQLSKGTKYLSTFSALTPVMLMEPPSHMGIFLDFEAGEVSFYSVSDGSHLHTYSQATFPGPLQPFFCLGAPKSGQMVISTVTMWVKG</sequence>
<organism>
    <name type="scientific">Homo sapiens</name>
    <name type="common">Human</name>
    <dbReference type="NCBI Taxonomy" id="9606"/>
    <lineage>
        <taxon>Eukaryota</taxon>
        <taxon>Metazoa</taxon>
        <taxon>Chordata</taxon>
        <taxon>Craniata</taxon>
        <taxon>Vertebrata</taxon>
        <taxon>Euteleostomi</taxon>
        <taxon>Mammalia</taxon>
        <taxon>Eutheria</taxon>
        <taxon>Euarchontoglires</taxon>
        <taxon>Primates</taxon>
        <taxon>Haplorrhini</taxon>
        <taxon>Catarrhini</taxon>
        <taxon>Hominidae</taxon>
        <taxon>Homo</taxon>
    </lineage>
</organism>
<proteinExistence type="evidence at protein level"/>
<reference key="1">
    <citation type="journal article" date="1998" name="Biochem. Biophys. Res. Commun.">
        <title>Molecular cloning of a novel RING finger-B box-coiled coil (RBCC) protein, terf, expressed in the testis.</title>
        <authorList>
            <person name="Ogawa S."/>
            <person name="Goto W."/>
            <person name="Orimo A."/>
            <person name="Hosoi T."/>
            <person name="Ouchi Y."/>
            <person name="Muramatsu M."/>
            <person name="Inoue S."/>
        </authorList>
    </citation>
    <scope>NUCLEOTIDE SEQUENCE [MRNA] (ISOFORM 1)</scope>
    <source>
        <tissue>Testis</tissue>
    </source>
</reference>
<reference key="2">
    <citation type="journal article" date="2004" name="Nat. Genet.">
        <title>Complete sequencing and characterization of 21,243 full-length human cDNAs.</title>
        <authorList>
            <person name="Ota T."/>
            <person name="Suzuki Y."/>
            <person name="Nishikawa T."/>
            <person name="Otsuki T."/>
            <person name="Sugiyama T."/>
            <person name="Irie R."/>
            <person name="Wakamatsu A."/>
            <person name="Hayashi K."/>
            <person name="Sato H."/>
            <person name="Nagai K."/>
            <person name="Kimura K."/>
            <person name="Makita H."/>
            <person name="Sekine M."/>
            <person name="Obayashi M."/>
            <person name="Nishi T."/>
            <person name="Shibahara T."/>
            <person name="Tanaka T."/>
            <person name="Ishii S."/>
            <person name="Yamamoto J."/>
            <person name="Saito K."/>
            <person name="Kawai Y."/>
            <person name="Isono Y."/>
            <person name="Nakamura Y."/>
            <person name="Nagahari K."/>
            <person name="Murakami K."/>
            <person name="Yasuda T."/>
            <person name="Iwayanagi T."/>
            <person name="Wagatsuma M."/>
            <person name="Shiratori A."/>
            <person name="Sudo H."/>
            <person name="Hosoiri T."/>
            <person name="Kaku Y."/>
            <person name="Kodaira H."/>
            <person name="Kondo H."/>
            <person name="Sugawara M."/>
            <person name="Takahashi M."/>
            <person name="Kanda K."/>
            <person name="Yokoi T."/>
            <person name="Furuya T."/>
            <person name="Kikkawa E."/>
            <person name="Omura Y."/>
            <person name="Abe K."/>
            <person name="Kamihara K."/>
            <person name="Katsuta N."/>
            <person name="Sato K."/>
            <person name="Tanikawa M."/>
            <person name="Yamazaki M."/>
            <person name="Ninomiya K."/>
            <person name="Ishibashi T."/>
            <person name="Yamashita H."/>
            <person name="Murakawa K."/>
            <person name="Fujimori K."/>
            <person name="Tanai H."/>
            <person name="Kimata M."/>
            <person name="Watanabe M."/>
            <person name="Hiraoka S."/>
            <person name="Chiba Y."/>
            <person name="Ishida S."/>
            <person name="Ono Y."/>
            <person name="Takiguchi S."/>
            <person name="Watanabe S."/>
            <person name="Yosida M."/>
            <person name="Hotuta T."/>
            <person name="Kusano J."/>
            <person name="Kanehori K."/>
            <person name="Takahashi-Fujii A."/>
            <person name="Hara H."/>
            <person name="Tanase T.-O."/>
            <person name="Nomura Y."/>
            <person name="Togiya S."/>
            <person name="Komai F."/>
            <person name="Hara R."/>
            <person name="Takeuchi K."/>
            <person name="Arita M."/>
            <person name="Imose N."/>
            <person name="Musashino K."/>
            <person name="Yuuki H."/>
            <person name="Oshima A."/>
            <person name="Sasaki N."/>
            <person name="Aotsuka S."/>
            <person name="Yoshikawa Y."/>
            <person name="Matsunawa H."/>
            <person name="Ichihara T."/>
            <person name="Shiohata N."/>
            <person name="Sano S."/>
            <person name="Moriya S."/>
            <person name="Momiyama H."/>
            <person name="Satoh N."/>
            <person name="Takami S."/>
            <person name="Terashima Y."/>
            <person name="Suzuki O."/>
            <person name="Nakagawa S."/>
            <person name="Senoh A."/>
            <person name="Mizoguchi H."/>
            <person name="Goto Y."/>
            <person name="Shimizu F."/>
            <person name="Wakebe H."/>
            <person name="Hishigaki H."/>
            <person name="Watanabe T."/>
            <person name="Sugiyama A."/>
            <person name="Takemoto M."/>
            <person name="Kawakami B."/>
            <person name="Yamazaki M."/>
            <person name="Watanabe K."/>
            <person name="Kumagai A."/>
            <person name="Itakura S."/>
            <person name="Fukuzumi Y."/>
            <person name="Fujimori Y."/>
            <person name="Komiyama M."/>
            <person name="Tashiro H."/>
            <person name="Tanigami A."/>
            <person name="Fujiwara T."/>
            <person name="Ono T."/>
            <person name="Yamada K."/>
            <person name="Fujii Y."/>
            <person name="Ozaki K."/>
            <person name="Hirao M."/>
            <person name="Ohmori Y."/>
            <person name="Kawabata A."/>
            <person name="Hikiji T."/>
            <person name="Kobatake N."/>
            <person name="Inagaki H."/>
            <person name="Ikema Y."/>
            <person name="Okamoto S."/>
            <person name="Okitani R."/>
            <person name="Kawakami T."/>
            <person name="Noguchi S."/>
            <person name="Itoh T."/>
            <person name="Shigeta K."/>
            <person name="Senba T."/>
            <person name="Matsumura K."/>
            <person name="Nakajima Y."/>
            <person name="Mizuno T."/>
            <person name="Morinaga M."/>
            <person name="Sasaki M."/>
            <person name="Togashi T."/>
            <person name="Oyama M."/>
            <person name="Hata H."/>
            <person name="Watanabe M."/>
            <person name="Komatsu T."/>
            <person name="Mizushima-Sugano J."/>
            <person name="Satoh T."/>
            <person name="Shirai Y."/>
            <person name="Takahashi Y."/>
            <person name="Nakagawa K."/>
            <person name="Okumura K."/>
            <person name="Nagase T."/>
            <person name="Nomura N."/>
            <person name="Kikuchi H."/>
            <person name="Masuho Y."/>
            <person name="Yamashita R."/>
            <person name="Nakai K."/>
            <person name="Yada T."/>
            <person name="Nakamura Y."/>
            <person name="Ohara O."/>
            <person name="Isogai T."/>
            <person name="Sugano S."/>
        </authorList>
    </citation>
    <scope>NUCLEOTIDE SEQUENCE [LARGE SCALE MRNA] (ISOFORM 2)</scope>
    <source>
        <tissue>Spleen</tissue>
    </source>
</reference>
<reference key="3">
    <citation type="journal article" date="2006" name="Nature">
        <title>The DNA sequence and biological annotation of human chromosome 1.</title>
        <authorList>
            <person name="Gregory S.G."/>
            <person name="Barlow K.F."/>
            <person name="McLay K.E."/>
            <person name="Kaul R."/>
            <person name="Swarbreck D."/>
            <person name="Dunham A."/>
            <person name="Scott C.E."/>
            <person name="Howe K.L."/>
            <person name="Woodfine K."/>
            <person name="Spencer C.C.A."/>
            <person name="Jones M.C."/>
            <person name="Gillson C."/>
            <person name="Searle S."/>
            <person name="Zhou Y."/>
            <person name="Kokocinski F."/>
            <person name="McDonald L."/>
            <person name="Evans R."/>
            <person name="Phillips K."/>
            <person name="Atkinson A."/>
            <person name="Cooper R."/>
            <person name="Jones C."/>
            <person name="Hall R.E."/>
            <person name="Andrews T.D."/>
            <person name="Lloyd C."/>
            <person name="Ainscough R."/>
            <person name="Almeida J.P."/>
            <person name="Ambrose K.D."/>
            <person name="Anderson F."/>
            <person name="Andrew R.W."/>
            <person name="Ashwell R.I.S."/>
            <person name="Aubin K."/>
            <person name="Babbage A.K."/>
            <person name="Bagguley C.L."/>
            <person name="Bailey J."/>
            <person name="Beasley H."/>
            <person name="Bethel G."/>
            <person name="Bird C.P."/>
            <person name="Bray-Allen S."/>
            <person name="Brown J.Y."/>
            <person name="Brown A.J."/>
            <person name="Buckley D."/>
            <person name="Burton J."/>
            <person name="Bye J."/>
            <person name="Carder C."/>
            <person name="Chapman J.C."/>
            <person name="Clark S.Y."/>
            <person name="Clarke G."/>
            <person name="Clee C."/>
            <person name="Cobley V."/>
            <person name="Collier R.E."/>
            <person name="Corby N."/>
            <person name="Coville G.J."/>
            <person name="Davies J."/>
            <person name="Deadman R."/>
            <person name="Dunn M."/>
            <person name="Earthrowl M."/>
            <person name="Ellington A.G."/>
            <person name="Errington H."/>
            <person name="Frankish A."/>
            <person name="Frankland J."/>
            <person name="French L."/>
            <person name="Garner P."/>
            <person name="Garnett J."/>
            <person name="Gay L."/>
            <person name="Ghori M.R.J."/>
            <person name="Gibson R."/>
            <person name="Gilby L.M."/>
            <person name="Gillett W."/>
            <person name="Glithero R.J."/>
            <person name="Grafham D.V."/>
            <person name="Griffiths C."/>
            <person name="Griffiths-Jones S."/>
            <person name="Grocock R."/>
            <person name="Hammond S."/>
            <person name="Harrison E.S.I."/>
            <person name="Hart E."/>
            <person name="Haugen E."/>
            <person name="Heath P.D."/>
            <person name="Holmes S."/>
            <person name="Holt K."/>
            <person name="Howden P.J."/>
            <person name="Hunt A.R."/>
            <person name="Hunt S.E."/>
            <person name="Hunter G."/>
            <person name="Isherwood J."/>
            <person name="James R."/>
            <person name="Johnson C."/>
            <person name="Johnson D."/>
            <person name="Joy A."/>
            <person name="Kay M."/>
            <person name="Kershaw J.K."/>
            <person name="Kibukawa M."/>
            <person name="Kimberley A.M."/>
            <person name="King A."/>
            <person name="Knights A.J."/>
            <person name="Lad H."/>
            <person name="Laird G."/>
            <person name="Lawlor S."/>
            <person name="Leongamornlert D.A."/>
            <person name="Lloyd D.M."/>
            <person name="Loveland J."/>
            <person name="Lovell J."/>
            <person name="Lush M.J."/>
            <person name="Lyne R."/>
            <person name="Martin S."/>
            <person name="Mashreghi-Mohammadi M."/>
            <person name="Matthews L."/>
            <person name="Matthews N.S.W."/>
            <person name="McLaren S."/>
            <person name="Milne S."/>
            <person name="Mistry S."/>
            <person name="Moore M.J.F."/>
            <person name="Nickerson T."/>
            <person name="O'Dell C.N."/>
            <person name="Oliver K."/>
            <person name="Palmeiri A."/>
            <person name="Palmer S.A."/>
            <person name="Parker A."/>
            <person name="Patel D."/>
            <person name="Pearce A.V."/>
            <person name="Peck A.I."/>
            <person name="Pelan S."/>
            <person name="Phelps K."/>
            <person name="Phillimore B.J."/>
            <person name="Plumb R."/>
            <person name="Rajan J."/>
            <person name="Raymond C."/>
            <person name="Rouse G."/>
            <person name="Saenphimmachak C."/>
            <person name="Sehra H.K."/>
            <person name="Sheridan E."/>
            <person name="Shownkeen R."/>
            <person name="Sims S."/>
            <person name="Skuce C.D."/>
            <person name="Smith M."/>
            <person name="Steward C."/>
            <person name="Subramanian S."/>
            <person name="Sycamore N."/>
            <person name="Tracey A."/>
            <person name="Tromans A."/>
            <person name="Van Helmond Z."/>
            <person name="Wall M."/>
            <person name="Wallis J.M."/>
            <person name="White S."/>
            <person name="Whitehead S.L."/>
            <person name="Wilkinson J.E."/>
            <person name="Willey D.L."/>
            <person name="Williams H."/>
            <person name="Wilming L."/>
            <person name="Wray P.W."/>
            <person name="Wu Z."/>
            <person name="Coulson A."/>
            <person name="Vaudin M."/>
            <person name="Sulston J.E."/>
            <person name="Durbin R.M."/>
            <person name="Hubbard T."/>
            <person name="Wooster R."/>
            <person name="Dunham I."/>
            <person name="Carter N.P."/>
            <person name="McVean G."/>
            <person name="Ross M.T."/>
            <person name="Harrow J."/>
            <person name="Olson M.V."/>
            <person name="Beck S."/>
            <person name="Rogers J."/>
            <person name="Bentley D.R."/>
        </authorList>
    </citation>
    <scope>NUCLEOTIDE SEQUENCE [LARGE SCALE GENOMIC DNA]</scope>
</reference>
<reference key="4">
    <citation type="journal article" date="2004" name="Genome Res.">
        <title>The status, quality, and expansion of the NIH full-length cDNA project: the Mammalian Gene Collection (MGC).</title>
        <authorList>
            <consortium name="The MGC Project Team"/>
        </authorList>
    </citation>
    <scope>NUCLEOTIDE SEQUENCE [LARGE SCALE MRNA] (ISOFORM 1)</scope>
    <source>
        <tissue>Brain</tissue>
    </source>
</reference>
<reference key="5">
    <citation type="journal article" date="2009" name="Biochem. Biophys. Res. Commun.">
        <title>TRIM44 interacts with and stabilizes terf, a TRIM ubiquitin E3 ligase.</title>
        <authorList>
            <person name="Urano T."/>
            <person name="Usui T."/>
            <person name="Takeda S."/>
            <person name="Ikeda K."/>
            <person name="Okada A."/>
            <person name="Ishida Y."/>
            <person name="Iwayanagi T."/>
            <person name="Otomo J."/>
            <person name="Ouchi Y."/>
            <person name="Inoue S."/>
        </authorList>
    </citation>
    <scope>FUNCTION</scope>
    <scope>TISSUE SPECIFICITY</scope>
    <scope>AUTOUBIQUITINATION</scope>
    <scope>INTERACTION WITH TRIM44</scope>
</reference>
<reference key="6">
    <citation type="journal article" date="2012" name="J. Biochem.">
        <title>Terf/TRIM17 stimulates degradation of kinetochore protein ZWINT and regulates cell proliferation.</title>
        <authorList>
            <person name="Endo H."/>
            <person name="Ikeda K."/>
            <person name="Urano T."/>
            <person name="Horie-Inoue K."/>
            <person name="Inoue S."/>
        </authorList>
    </citation>
    <scope>FUNCTION</scope>
</reference>
<reference key="7">
    <citation type="journal article" date="2016" name="J. Cell Sci.">
        <title>TRIM17 contributes to autophagy of midbodies while actively sparing other targets from degradation.</title>
        <authorList>
            <person name="Mandell M.A."/>
            <person name="Jain A."/>
            <person name="Kumar S."/>
            <person name="Castleman M.J."/>
            <person name="Anwar T."/>
            <person name="Eskelinen E.L."/>
            <person name="Johansen T."/>
            <person name="Prekeris R."/>
            <person name="Deretic V."/>
        </authorList>
    </citation>
    <scope>FUNCTION IN AUTOPHAGY</scope>
    <scope>SUBCELLULAR LOCATION</scope>
    <scope>INTERACTION WITH BECN1</scope>
</reference>
<reference key="8">
    <citation type="journal article" date="2019" name="Cell Death Differ.">
        <title>TRIM17 and TRIM28 antagonistically regulate the ubiquitination and anti-apoptotic activity of BCL2A1.</title>
        <authorList>
            <person name="Lionnard L."/>
            <person name="Duc P."/>
            <person name="Brennan M.S."/>
            <person name="Kueh A.J."/>
            <person name="Pal M."/>
            <person name="Guardia F."/>
            <person name="Mojsa B."/>
            <person name="Damiano M.A."/>
            <person name="Mora S."/>
            <person name="Lassot I."/>
            <person name="Ravichandran R."/>
            <person name="Cochet C."/>
            <person name="Aouacheria A."/>
            <person name="Potts P.R."/>
            <person name="Herold M.J."/>
            <person name="Desagher S."/>
            <person name="Kucharczak J."/>
        </authorList>
    </citation>
    <scope>FUNCTION</scope>
    <scope>INTERACTION WITH TRIM28</scope>
</reference>
<comment type="function">
    <text evidence="1 6 7 8">E3 ubiquitin ligase that plays important roles in the regulation of neuronal apoptosis, selective autophagy or cell proliferation (PubMed:19358823, PubMed:22023800, PubMed:27562068). Stimulates the degradation of kinetochore ZW10 interacting protein ZWINT in a proteasome-dependent manner, leading to negative regulation of cell proliferation (PubMed:22023800). Inhibits autophagic degradation of diverse known targets while contributing to autophagy of midbodies. Autophagy-inhibitory activity involves MCL1, which TRIM17 assembles into complexes with the key autophagy regulator BECN1 (PubMed:27562068). Controls neuronal apoptosis by mediating ubiquitination and degradation of MCL1 to initiate neuronal death. In addition, regulates NFAT transcription factors NFATC3 and NFATC4 activities by preventing their nuclear localization, thus inhibiting their transcriptional activities. Decreases TRIM41-mediated degradation of ZSCAN2 thereby stimulating alpha-synuclein/SNCA transcription in neuronal cells (By similarity). Prevents the E3 ubiquitin-ligase activity of TRIM28 and its interaction with anti-apoptotic BCL2A1, blocking TRIM28 from ubiquitinating BCL2A1 (PubMed:19358823).</text>
</comment>
<comment type="catalytic activity">
    <reaction>
        <text>S-ubiquitinyl-[E2 ubiquitin-conjugating enzyme]-L-cysteine + [acceptor protein]-L-lysine = [E2 ubiquitin-conjugating enzyme]-L-cysteine + N(6)-ubiquitinyl-[acceptor protein]-L-lysine.</text>
        <dbReference type="EC" id="2.3.2.27"/>
    </reaction>
</comment>
<comment type="pathway">
    <text>Protein modification; protein ubiquitination.</text>
</comment>
<comment type="subunit">
    <text evidence="1 6 8 9">Interacts (via coiled coil) with TRIM44 (via coiled coil) (PubMed:19358823). Interacts with TRIM28; this interaction prevents TRIM28 activity on BCL2A1 (PubMed:30042493). Interacts with TRIM41; this interaction prevents TRIM41 activity on ZSCAN2 (By similarity). Interacts with BECN1 (PubMed:27562068). Interacts with NFATC3 and NFATC4; these interactions prevent NFATC3 and NFATC4 nuclear localization (By similarity).</text>
</comment>
<comment type="interaction">
    <interactant intactId="EBI-743894">
        <id>Q9Y577</id>
    </interactant>
    <interactant intactId="EBI-740220">
        <id>O14964</id>
        <label>HGS</label>
    </interactant>
    <organismsDiffer>false</organismsDiffer>
    <experiments>6</experiments>
</comment>
<comment type="interaction">
    <interactant intactId="EBI-743894">
        <id>Q9Y577</id>
    </interactant>
    <interactant intactId="EBI-16439278">
        <id>Q6FHY5</id>
        <label>MEOX2</label>
    </interactant>
    <organismsDiffer>false</organismsDiffer>
    <experiments>3</experiments>
</comment>
<comment type="interaction">
    <interactant intactId="EBI-743894">
        <id>Q9Y577</id>
    </interactant>
    <interactant intactId="EBI-739510">
        <id>Q9HCM9</id>
        <label>TRIM39</label>
    </interactant>
    <organismsDiffer>false</organismsDiffer>
    <experiments>8</experiments>
</comment>
<comment type="interaction">
    <interactant intactId="EBI-743894">
        <id>Q9Y577</id>
    </interactant>
    <interactant intactId="EBI-725997">
        <id>Q8WV44</id>
        <label>TRIM41</label>
    </interactant>
    <organismsDiffer>false</organismsDiffer>
    <experiments>4</experiments>
</comment>
<comment type="subcellular location">
    <subcellularLocation>
        <location evidence="8">Cytoplasm</location>
    </subcellularLocation>
    <subcellularLocation>
        <location evidence="8">Lysosome</location>
    </subcellularLocation>
</comment>
<comment type="alternative products">
    <event type="alternative splicing"/>
    <isoform>
        <id>Q9Y577-1</id>
        <name>1</name>
        <sequence type="displayed"/>
    </isoform>
    <isoform>
        <id>Q9Y577-2</id>
        <name>2</name>
        <sequence type="described" ref="VSP_040994 VSP_040995"/>
    </isoform>
</comment>
<comment type="tissue specificity">
    <text evidence="6">Almost exclusively in the testis.</text>
</comment>
<comment type="PTM">
    <text evidence="6">Auto-ubiquitinated.</text>
</comment>
<comment type="similarity">
    <text evidence="11">Belongs to the TRIM/RBCC family.</text>
</comment>
<feature type="chain" id="PRO_0000056224" description="E3 ubiquitin-protein ligase TRIM17">
    <location>
        <begin position="1"/>
        <end position="477"/>
    </location>
</feature>
<feature type="domain" description="B30.2/SPRY" evidence="5">
    <location>
        <begin position="277"/>
        <end position="475"/>
    </location>
</feature>
<feature type="zinc finger region" description="RING-type" evidence="4">
    <location>
        <begin position="16"/>
        <end position="66"/>
    </location>
</feature>
<feature type="zinc finger region" description="B box-type" evidence="3">
    <location>
        <begin position="94"/>
        <end position="135"/>
    </location>
</feature>
<feature type="coiled-coil region" evidence="2">
    <location>
        <begin position="135"/>
        <end position="223"/>
    </location>
</feature>
<feature type="binding site" evidence="3">
    <location>
        <position position="99"/>
    </location>
    <ligand>
        <name>Zn(2+)</name>
        <dbReference type="ChEBI" id="CHEBI:29105"/>
    </ligand>
</feature>
<feature type="binding site" evidence="3">
    <location>
        <position position="102"/>
    </location>
    <ligand>
        <name>Zn(2+)</name>
        <dbReference type="ChEBI" id="CHEBI:29105"/>
    </ligand>
</feature>
<feature type="binding site" evidence="3">
    <location>
        <position position="121"/>
    </location>
    <ligand>
        <name>Zn(2+)</name>
        <dbReference type="ChEBI" id="CHEBI:29105"/>
    </ligand>
</feature>
<feature type="binding site" evidence="3">
    <location>
        <position position="127"/>
    </location>
    <ligand>
        <name>Zn(2+)</name>
        <dbReference type="ChEBI" id="CHEBI:29105"/>
    </ligand>
</feature>
<feature type="splice variant" id="VSP_040994" description="In isoform 2." evidence="10">
    <original>EDVVPDATSAYPYLLLYESRQRRYLGSSPEGSGFCSKDRFVAYPCAVGQ</original>
    <variation>GKWAPRARTSDPGSLGDAPLYPLASEATNGGGSTSALPGDGHWLFTVPS</variation>
    <location>
        <begin position="295"/>
        <end position="343"/>
    </location>
</feature>
<feature type="splice variant" id="VSP_040995" description="In isoform 2." evidence="10">
    <location>
        <begin position="344"/>
        <end position="477"/>
    </location>
</feature>
<keyword id="KW-0025">Alternative splicing</keyword>
<keyword id="KW-0175">Coiled coil</keyword>
<keyword id="KW-0963">Cytoplasm</keyword>
<keyword id="KW-0458">Lysosome</keyword>
<keyword id="KW-0479">Metal-binding</keyword>
<keyword id="KW-1267">Proteomics identification</keyword>
<keyword id="KW-1185">Reference proteome</keyword>
<keyword id="KW-0808">Transferase</keyword>
<keyword id="KW-0832">Ubl conjugation</keyword>
<keyword id="KW-0833">Ubl conjugation pathway</keyword>
<keyword id="KW-0862">Zinc</keyword>
<keyword id="KW-0863">Zinc-finger</keyword>
<gene>
    <name type="primary">TRIM17</name>
    <name type="synonym">RBCC</name>
    <name type="synonym">RNF16</name>
    <name type="synonym">TERF</name>
</gene>
<evidence type="ECO:0000250" key="1">
    <source>
        <dbReference type="UniProtKB" id="Q7TPM3"/>
    </source>
</evidence>
<evidence type="ECO:0000255" key="2"/>
<evidence type="ECO:0000255" key="3">
    <source>
        <dbReference type="PROSITE-ProRule" id="PRU00024"/>
    </source>
</evidence>
<evidence type="ECO:0000255" key="4">
    <source>
        <dbReference type="PROSITE-ProRule" id="PRU00175"/>
    </source>
</evidence>
<evidence type="ECO:0000255" key="5">
    <source>
        <dbReference type="PROSITE-ProRule" id="PRU00548"/>
    </source>
</evidence>
<evidence type="ECO:0000269" key="6">
    <source>
    </source>
</evidence>
<evidence type="ECO:0000269" key="7">
    <source>
    </source>
</evidence>
<evidence type="ECO:0000269" key="8">
    <source>
    </source>
</evidence>
<evidence type="ECO:0000269" key="9">
    <source>
    </source>
</evidence>
<evidence type="ECO:0000303" key="10">
    <source>
    </source>
</evidence>
<evidence type="ECO:0000305" key="11"/>
<dbReference type="EC" id="2.3.2.27"/>
<dbReference type="EMBL" id="AF156271">
    <property type="protein sequence ID" value="AAD40286.1"/>
    <property type="molecule type" value="mRNA"/>
</dbReference>
<dbReference type="EMBL" id="AK301105">
    <property type="protein sequence ID" value="BAG62704.1"/>
    <property type="molecule type" value="mRNA"/>
</dbReference>
<dbReference type="EMBL" id="AL670729">
    <property type="status" value="NOT_ANNOTATED_CDS"/>
    <property type="molecule type" value="Genomic_DNA"/>
</dbReference>
<dbReference type="EMBL" id="AL139288">
    <property type="status" value="NOT_ANNOTATED_CDS"/>
    <property type="molecule type" value="Genomic_DNA"/>
</dbReference>
<dbReference type="EMBL" id="BC033788">
    <property type="protein sequence ID" value="AAH33788.1"/>
    <property type="molecule type" value="mRNA"/>
</dbReference>
<dbReference type="CCDS" id="CCDS1571.1">
    <molecule id="Q9Y577-1"/>
</dbReference>
<dbReference type="CCDS" id="CCDS44327.1">
    <molecule id="Q9Y577-2"/>
</dbReference>
<dbReference type="RefSeq" id="NP_001020111.1">
    <molecule id="Q9Y577-1"/>
    <property type="nucleotide sequence ID" value="NM_001024940.3"/>
</dbReference>
<dbReference type="RefSeq" id="NP_001128327.1">
    <molecule id="Q9Y577-2"/>
    <property type="nucleotide sequence ID" value="NM_001134855.2"/>
</dbReference>
<dbReference type="RefSeq" id="NP_057186.1">
    <molecule id="Q9Y577-1"/>
    <property type="nucleotide sequence ID" value="NM_016102.4"/>
</dbReference>
<dbReference type="RefSeq" id="XP_006711842.1">
    <molecule id="Q9Y577-1"/>
    <property type="nucleotide sequence ID" value="XM_006711779.4"/>
</dbReference>
<dbReference type="RefSeq" id="XP_011542511.1">
    <molecule id="Q9Y577-1"/>
    <property type="nucleotide sequence ID" value="XM_011544209.4"/>
</dbReference>
<dbReference type="RefSeq" id="XP_011542512.1">
    <molecule id="Q9Y577-1"/>
    <property type="nucleotide sequence ID" value="XM_011544210.4"/>
</dbReference>
<dbReference type="RefSeq" id="XP_047278034.1">
    <molecule id="Q9Y577-1"/>
    <property type="nucleotide sequence ID" value="XM_047422078.1"/>
</dbReference>
<dbReference type="RefSeq" id="XP_054192869.1">
    <molecule id="Q9Y577-1"/>
    <property type="nucleotide sequence ID" value="XM_054336894.1"/>
</dbReference>
<dbReference type="RefSeq" id="XP_054192870.1">
    <molecule id="Q9Y577-1"/>
    <property type="nucleotide sequence ID" value="XM_054336895.1"/>
</dbReference>
<dbReference type="RefSeq" id="XP_054192871.1">
    <molecule id="Q9Y577-1"/>
    <property type="nucleotide sequence ID" value="XM_054336896.1"/>
</dbReference>
<dbReference type="SMR" id="Q9Y577"/>
<dbReference type="BioGRID" id="119314">
    <property type="interactions" value="86"/>
</dbReference>
<dbReference type="FunCoup" id="Q9Y577">
    <property type="interactions" value="4"/>
</dbReference>
<dbReference type="IntAct" id="Q9Y577">
    <property type="interactions" value="27"/>
</dbReference>
<dbReference type="STRING" id="9606.ENSP00000355658"/>
<dbReference type="GlyGen" id="Q9Y577">
    <property type="glycosylation" value="1 site, 1 O-linked glycan (1 site)"/>
</dbReference>
<dbReference type="iPTMnet" id="Q9Y577"/>
<dbReference type="PhosphoSitePlus" id="Q9Y577"/>
<dbReference type="BioMuta" id="TRIM17"/>
<dbReference type="DMDM" id="38605530"/>
<dbReference type="MassIVE" id="Q9Y577"/>
<dbReference type="PaxDb" id="9606-ENSP00000355658"/>
<dbReference type="PeptideAtlas" id="Q9Y577"/>
<dbReference type="ProteomicsDB" id="86309">
    <molecule id="Q9Y577-1"/>
</dbReference>
<dbReference type="ProteomicsDB" id="86310">
    <molecule id="Q9Y577-2"/>
</dbReference>
<dbReference type="Antibodypedia" id="20781">
    <property type="antibodies" value="157 antibodies from 24 providers"/>
</dbReference>
<dbReference type="DNASU" id="51127"/>
<dbReference type="Ensembl" id="ENST00000295033.7">
    <molecule id="Q9Y577-1"/>
    <property type="protein sequence ID" value="ENSP00000295033.3"/>
    <property type="gene ID" value="ENSG00000162931.12"/>
</dbReference>
<dbReference type="Ensembl" id="ENST00000366697.6">
    <molecule id="Q9Y577-1"/>
    <property type="protein sequence ID" value="ENSP00000355658.2"/>
    <property type="gene ID" value="ENSG00000162931.12"/>
</dbReference>
<dbReference type="Ensembl" id="ENST00000366698.7">
    <molecule id="Q9Y577-1"/>
    <property type="protein sequence ID" value="ENSP00000355659.2"/>
    <property type="gene ID" value="ENSG00000162931.12"/>
</dbReference>
<dbReference type="Ensembl" id="ENST00000456946.6">
    <molecule id="Q9Y577-2"/>
    <property type="protein sequence ID" value="ENSP00000403312.2"/>
    <property type="gene ID" value="ENSG00000162931.12"/>
</dbReference>
<dbReference type="GeneID" id="51127"/>
<dbReference type="KEGG" id="hsa:51127"/>
<dbReference type="MANE-Select" id="ENST00000366698.7">
    <property type="protein sequence ID" value="ENSP00000355659.2"/>
    <property type="RefSeq nucleotide sequence ID" value="NM_016102.4"/>
    <property type="RefSeq protein sequence ID" value="NP_057186.1"/>
</dbReference>
<dbReference type="UCSC" id="uc001hsu.4">
    <molecule id="Q9Y577-1"/>
    <property type="organism name" value="human"/>
</dbReference>
<dbReference type="AGR" id="HGNC:13430"/>
<dbReference type="CTD" id="51127"/>
<dbReference type="DisGeNET" id="51127"/>
<dbReference type="GeneCards" id="TRIM17"/>
<dbReference type="HGNC" id="HGNC:13430">
    <property type="gene designation" value="TRIM17"/>
</dbReference>
<dbReference type="HPA" id="ENSG00000162931">
    <property type="expression patterns" value="Group enriched (brain, testis)"/>
</dbReference>
<dbReference type="MalaCards" id="TRIM17"/>
<dbReference type="MIM" id="606123">
    <property type="type" value="gene"/>
</dbReference>
<dbReference type="neXtProt" id="NX_Q9Y577"/>
<dbReference type="OpenTargets" id="ENSG00000162931"/>
<dbReference type="PharmGKB" id="PA37768"/>
<dbReference type="VEuPathDB" id="HostDB:ENSG00000162931"/>
<dbReference type="eggNOG" id="KOG2177">
    <property type="taxonomic scope" value="Eukaryota"/>
</dbReference>
<dbReference type="GeneTree" id="ENSGT00940000162155"/>
<dbReference type="HOGENOM" id="CLU_013137_0_3_1"/>
<dbReference type="InParanoid" id="Q9Y577"/>
<dbReference type="OMA" id="YPCVVGQ"/>
<dbReference type="OrthoDB" id="654191at2759"/>
<dbReference type="PAN-GO" id="Q9Y577">
    <property type="GO annotations" value="5 GO annotations based on evolutionary models"/>
</dbReference>
<dbReference type="PhylomeDB" id="Q9Y577"/>
<dbReference type="TreeFam" id="TF338674"/>
<dbReference type="PathwayCommons" id="Q9Y577"/>
<dbReference type="Reactome" id="R-HSA-877300">
    <property type="pathway name" value="Interferon gamma signaling"/>
</dbReference>
<dbReference type="SignaLink" id="Q9Y577"/>
<dbReference type="SIGNOR" id="Q9Y577"/>
<dbReference type="UniPathway" id="UPA00143"/>
<dbReference type="BioGRID-ORCS" id="51127">
    <property type="hits" value="13 hits in 1181 CRISPR screens"/>
</dbReference>
<dbReference type="GenomeRNAi" id="51127"/>
<dbReference type="Pharos" id="Q9Y577">
    <property type="development level" value="Tbio"/>
</dbReference>
<dbReference type="PRO" id="PR:Q9Y577"/>
<dbReference type="Proteomes" id="UP000005640">
    <property type="component" value="Chromosome 1"/>
</dbReference>
<dbReference type="RNAct" id="Q9Y577">
    <property type="molecule type" value="protein"/>
</dbReference>
<dbReference type="Bgee" id="ENSG00000162931">
    <property type="expression patterns" value="Expressed in right hemisphere of cerebellum and 98 other cell types or tissues"/>
</dbReference>
<dbReference type="ExpressionAtlas" id="Q9Y577">
    <property type="expression patterns" value="baseline and differential"/>
</dbReference>
<dbReference type="GO" id="GO:0005737">
    <property type="term" value="C:cytoplasm"/>
    <property type="evidence" value="ECO:0000318"/>
    <property type="project" value="GO_Central"/>
</dbReference>
<dbReference type="GO" id="GO:0005764">
    <property type="term" value="C:lysosome"/>
    <property type="evidence" value="ECO:0007669"/>
    <property type="project" value="UniProtKB-SubCell"/>
</dbReference>
<dbReference type="GO" id="GO:0030674">
    <property type="term" value="F:protein-macromolecule adaptor activity"/>
    <property type="evidence" value="ECO:0000353"/>
    <property type="project" value="UniProtKB"/>
</dbReference>
<dbReference type="GO" id="GO:0061630">
    <property type="term" value="F:ubiquitin protein ligase activity"/>
    <property type="evidence" value="ECO:0000318"/>
    <property type="project" value="GO_Central"/>
</dbReference>
<dbReference type="GO" id="GO:0004842">
    <property type="term" value="F:ubiquitin-protein transferase activity"/>
    <property type="evidence" value="ECO:0000314"/>
    <property type="project" value="UniProtKB"/>
</dbReference>
<dbReference type="GO" id="GO:0008270">
    <property type="term" value="F:zinc ion binding"/>
    <property type="evidence" value="ECO:0007669"/>
    <property type="project" value="UniProtKB-KW"/>
</dbReference>
<dbReference type="GO" id="GO:0006914">
    <property type="term" value="P:autophagy"/>
    <property type="evidence" value="ECO:0000314"/>
    <property type="project" value="UniProtKB"/>
</dbReference>
<dbReference type="GO" id="GO:0045087">
    <property type="term" value="P:innate immune response"/>
    <property type="evidence" value="ECO:0000318"/>
    <property type="project" value="GO_Central"/>
</dbReference>
<dbReference type="GO" id="GO:0051865">
    <property type="term" value="P:protein autoubiquitination"/>
    <property type="evidence" value="ECO:0000314"/>
    <property type="project" value="UniProtKB"/>
</dbReference>
<dbReference type="GO" id="GO:0010468">
    <property type="term" value="P:regulation of gene expression"/>
    <property type="evidence" value="ECO:0000318"/>
    <property type="project" value="GO_Central"/>
</dbReference>
<dbReference type="GO" id="GO:0032880">
    <property type="term" value="P:regulation of protein localization"/>
    <property type="evidence" value="ECO:0000315"/>
    <property type="project" value="UniProtKB"/>
</dbReference>
<dbReference type="CDD" id="cd19762">
    <property type="entry name" value="Bbox2_TRIM7-like"/>
    <property type="match status" value="1"/>
</dbReference>
<dbReference type="CDD" id="cd16595">
    <property type="entry name" value="RING-HC_TRIM17_C-IV"/>
    <property type="match status" value="1"/>
</dbReference>
<dbReference type="CDD" id="cd15812">
    <property type="entry name" value="SPRY_PRY_TRIM17"/>
    <property type="match status" value="1"/>
</dbReference>
<dbReference type="FunFam" id="3.30.40.10:FF:000232">
    <property type="entry name" value="E3 ubiquitin-protein ligase TRIM11"/>
    <property type="match status" value="1"/>
</dbReference>
<dbReference type="FunFam" id="2.60.120.920:FF:000057">
    <property type="entry name" value="E3 ubiquitin-protein ligase TRIM17"/>
    <property type="match status" value="1"/>
</dbReference>
<dbReference type="Gene3D" id="2.60.120.920">
    <property type="match status" value="1"/>
</dbReference>
<dbReference type="Gene3D" id="3.30.160.60">
    <property type="entry name" value="Classic Zinc Finger"/>
    <property type="match status" value="1"/>
</dbReference>
<dbReference type="Gene3D" id="3.30.40.10">
    <property type="entry name" value="Zinc/RING finger domain, C3HC4 (zinc finger)"/>
    <property type="match status" value="1"/>
</dbReference>
<dbReference type="InterPro" id="IPR001870">
    <property type="entry name" value="B30.2/SPRY"/>
</dbReference>
<dbReference type="InterPro" id="IPR043136">
    <property type="entry name" value="B30.2/SPRY_sf"/>
</dbReference>
<dbReference type="InterPro" id="IPR003879">
    <property type="entry name" value="Butyrophylin_SPRY"/>
</dbReference>
<dbReference type="InterPro" id="IPR013320">
    <property type="entry name" value="ConA-like_dom_sf"/>
</dbReference>
<dbReference type="InterPro" id="IPR006574">
    <property type="entry name" value="PRY"/>
</dbReference>
<dbReference type="InterPro" id="IPR003877">
    <property type="entry name" value="SPRY_dom"/>
</dbReference>
<dbReference type="InterPro" id="IPR050143">
    <property type="entry name" value="TRIM/RBCC"/>
</dbReference>
<dbReference type="InterPro" id="IPR035687">
    <property type="entry name" value="TRIM17_PRY/SPRY"/>
</dbReference>
<dbReference type="InterPro" id="IPR027370">
    <property type="entry name" value="Znf-RING_euk"/>
</dbReference>
<dbReference type="InterPro" id="IPR000315">
    <property type="entry name" value="Znf_B-box"/>
</dbReference>
<dbReference type="InterPro" id="IPR001841">
    <property type="entry name" value="Znf_RING"/>
</dbReference>
<dbReference type="InterPro" id="IPR013083">
    <property type="entry name" value="Znf_RING/FYVE/PHD"/>
</dbReference>
<dbReference type="InterPro" id="IPR017907">
    <property type="entry name" value="Znf_RING_CS"/>
</dbReference>
<dbReference type="PANTHER" id="PTHR24103">
    <property type="entry name" value="E3 UBIQUITIN-PROTEIN LIGASE TRIM"/>
    <property type="match status" value="1"/>
</dbReference>
<dbReference type="Pfam" id="PF00622">
    <property type="entry name" value="SPRY"/>
    <property type="match status" value="1"/>
</dbReference>
<dbReference type="Pfam" id="PF00643">
    <property type="entry name" value="zf-B_box"/>
    <property type="match status" value="1"/>
</dbReference>
<dbReference type="Pfam" id="PF13445">
    <property type="entry name" value="zf-RING_UBOX"/>
    <property type="match status" value="1"/>
</dbReference>
<dbReference type="PRINTS" id="PR01407">
    <property type="entry name" value="BUTYPHLNCDUF"/>
</dbReference>
<dbReference type="SMART" id="SM00336">
    <property type="entry name" value="BBOX"/>
    <property type="match status" value="1"/>
</dbReference>
<dbReference type="SMART" id="SM00589">
    <property type="entry name" value="PRY"/>
    <property type="match status" value="1"/>
</dbReference>
<dbReference type="SMART" id="SM00184">
    <property type="entry name" value="RING"/>
    <property type="match status" value="1"/>
</dbReference>
<dbReference type="SMART" id="SM00449">
    <property type="entry name" value="SPRY"/>
    <property type="match status" value="1"/>
</dbReference>
<dbReference type="SUPFAM" id="SSF57845">
    <property type="entry name" value="B-box zinc-binding domain"/>
    <property type="match status" value="1"/>
</dbReference>
<dbReference type="SUPFAM" id="SSF49899">
    <property type="entry name" value="Concanavalin A-like lectins/glucanases"/>
    <property type="match status" value="1"/>
</dbReference>
<dbReference type="SUPFAM" id="SSF57850">
    <property type="entry name" value="RING/U-box"/>
    <property type="match status" value="1"/>
</dbReference>
<dbReference type="PROSITE" id="PS50188">
    <property type="entry name" value="B302_SPRY"/>
    <property type="match status" value="1"/>
</dbReference>
<dbReference type="PROSITE" id="PS50119">
    <property type="entry name" value="ZF_BBOX"/>
    <property type="match status" value="1"/>
</dbReference>
<dbReference type="PROSITE" id="PS00518">
    <property type="entry name" value="ZF_RING_1"/>
    <property type="match status" value="1"/>
</dbReference>
<dbReference type="PROSITE" id="PS50089">
    <property type="entry name" value="ZF_RING_2"/>
    <property type="match status" value="1"/>
</dbReference>
<accession>Q9Y577</accession>
<accession>B4DVJ2</accession>
<accession>Q5VST8</accession>